<comment type="function">
    <text evidence="1">Purine salvage pathway enzyme that catalyzes the transfer of the ribosyl-5-phosphate group from 5-phospho-alpha-D-ribose 1-diphosphate (PRPP) to the N9 position of the 6-oxopurines guanine and xanthine to form the corresponding ribonucleotides GMP (guanosine 5'-monophosphate) and XMP (xanthosine 5'-monophosphate), with the release of PPi. To a lesser extent, also acts on hypoxanthine.</text>
</comment>
<comment type="catalytic activity">
    <reaction evidence="1">
        <text>GMP + diphosphate = guanine + 5-phospho-alpha-D-ribose 1-diphosphate</text>
        <dbReference type="Rhea" id="RHEA:25424"/>
        <dbReference type="ChEBI" id="CHEBI:16235"/>
        <dbReference type="ChEBI" id="CHEBI:33019"/>
        <dbReference type="ChEBI" id="CHEBI:58017"/>
        <dbReference type="ChEBI" id="CHEBI:58115"/>
    </reaction>
    <physiologicalReaction direction="right-to-left" evidence="1">
        <dbReference type="Rhea" id="RHEA:25426"/>
    </physiologicalReaction>
</comment>
<comment type="catalytic activity">
    <reaction evidence="1">
        <text>XMP + diphosphate = xanthine + 5-phospho-alpha-D-ribose 1-diphosphate</text>
        <dbReference type="Rhea" id="RHEA:10800"/>
        <dbReference type="ChEBI" id="CHEBI:17712"/>
        <dbReference type="ChEBI" id="CHEBI:33019"/>
        <dbReference type="ChEBI" id="CHEBI:57464"/>
        <dbReference type="ChEBI" id="CHEBI:58017"/>
        <dbReference type="EC" id="2.4.2.22"/>
    </reaction>
    <physiologicalReaction direction="right-to-left" evidence="1">
        <dbReference type="Rhea" id="RHEA:10802"/>
    </physiologicalReaction>
</comment>
<comment type="catalytic activity">
    <reaction evidence="1">
        <text>IMP + diphosphate = hypoxanthine + 5-phospho-alpha-D-ribose 1-diphosphate</text>
        <dbReference type="Rhea" id="RHEA:17973"/>
        <dbReference type="ChEBI" id="CHEBI:17368"/>
        <dbReference type="ChEBI" id="CHEBI:33019"/>
        <dbReference type="ChEBI" id="CHEBI:58017"/>
        <dbReference type="ChEBI" id="CHEBI:58053"/>
    </reaction>
    <physiologicalReaction direction="right-to-left" evidence="1">
        <dbReference type="Rhea" id="RHEA:17975"/>
    </physiologicalReaction>
</comment>
<comment type="cofactor">
    <cofactor evidence="1">
        <name>Mg(2+)</name>
        <dbReference type="ChEBI" id="CHEBI:18420"/>
    </cofactor>
</comment>
<comment type="pathway">
    <text evidence="1">Purine metabolism; GMP biosynthesis via salvage pathway; GMP from guanine: step 1/1.</text>
</comment>
<comment type="pathway">
    <text evidence="1">Purine metabolism; XMP biosynthesis via salvage pathway; XMP from xanthine: step 1/1.</text>
</comment>
<comment type="subunit">
    <text evidence="1">Homotetramer.</text>
</comment>
<comment type="subcellular location">
    <subcellularLocation>
        <location evidence="1">Cell inner membrane</location>
        <topology evidence="1">Peripheral membrane protein</topology>
    </subcellularLocation>
</comment>
<comment type="similarity">
    <text evidence="1">Belongs to the purine/pyrimidine phosphoribosyltransferase family. XGPT subfamily.</text>
</comment>
<accession>A9R2X4</accession>
<sequence length="152" mass="16966">MNEKYVVTWDMLQIHARKLAQRLLPAEQWKGIIAVSRGGLVPAGILARELGIRYVDTVCISSYDHDNQRDLKVLKRAEGDGEGFIVIDDLVDTGGTATAIREMYPKAHFVTIFAKPAGRPLVDDYVVDIPQNTWIEQPWDMAVTFVAPLSGK</sequence>
<dbReference type="EC" id="2.4.2.-" evidence="1"/>
<dbReference type="EC" id="2.4.2.22" evidence="1"/>
<dbReference type="EMBL" id="CP000901">
    <property type="protein sequence ID" value="ABX86011.1"/>
    <property type="molecule type" value="Genomic_DNA"/>
</dbReference>
<dbReference type="RefSeq" id="WP_002208704.1">
    <property type="nucleotide sequence ID" value="NZ_CP009935.1"/>
</dbReference>
<dbReference type="SMR" id="A9R2X4"/>
<dbReference type="GeneID" id="57975493"/>
<dbReference type="KEGG" id="ypg:YpAngola_A3304"/>
<dbReference type="PATRIC" id="fig|349746.12.peg.1"/>
<dbReference type="UniPathway" id="UPA00602">
    <property type="reaction ID" value="UER00658"/>
</dbReference>
<dbReference type="UniPathway" id="UPA00909">
    <property type="reaction ID" value="UER00887"/>
</dbReference>
<dbReference type="GO" id="GO:0005829">
    <property type="term" value="C:cytosol"/>
    <property type="evidence" value="ECO:0007669"/>
    <property type="project" value="TreeGrafter"/>
</dbReference>
<dbReference type="GO" id="GO:0005886">
    <property type="term" value="C:plasma membrane"/>
    <property type="evidence" value="ECO:0007669"/>
    <property type="project" value="UniProtKB-SubCell"/>
</dbReference>
<dbReference type="GO" id="GO:0052657">
    <property type="term" value="F:guanine phosphoribosyltransferase activity"/>
    <property type="evidence" value="ECO:0007669"/>
    <property type="project" value="RHEA"/>
</dbReference>
<dbReference type="GO" id="GO:0004422">
    <property type="term" value="F:hypoxanthine phosphoribosyltransferase activity"/>
    <property type="evidence" value="ECO:0007669"/>
    <property type="project" value="TreeGrafter"/>
</dbReference>
<dbReference type="GO" id="GO:0000287">
    <property type="term" value="F:magnesium ion binding"/>
    <property type="evidence" value="ECO:0007669"/>
    <property type="project" value="UniProtKB-UniRule"/>
</dbReference>
<dbReference type="GO" id="GO:0000310">
    <property type="term" value="F:xanthine phosphoribosyltransferase activity"/>
    <property type="evidence" value="ECO:0007669"/>
    <property type="project" value="UniProtKB-UniRule"/>
</dbReference>
<dbReference type="GO" id="GO:0032263">
    <property type="term" value="P:GMP salvage"/>
    <property type="evidence" value="ECO:0007669"/>
    <property type="project" value="UniProtKB-UniRule"/>
</dbReference>
<dbReference type="GO" id="GO:0032264">
    <property type="term" value="P:IMP salvage"/>
    <property type="evidence" value="ECO:0007669"/>
    <property type="project" value="TreeGrafter"/>
</dbReference>
<dbReference type="GO" id="GO:0006166">
    <property type="term" value="P:purine ribonucleoside salvage"/>
    <property type="evidence" value="ECO:0007669"/>
    <property type="project" value="UniProtKB-KW"/>
</dbReference>
<dbReference type="GO" id="GO:0032265">
    <property type="term" value="P:XMP salvage"/>
    <property type="evidence" value="ECO:0007669"/>
    <property type="project" value="UniProtKB-UniRule"/>
</dbReference>
<dbReference type="CDD" id="cd06223">
    <property type="entry name" value="PRTases_typeI"/>
    <property type="match status" value="1"/>
</dbReference>
<dbReference type="FunFam" id="3.40.50.2020:FF:000009">
    <property type="entry name" value="Xanthine phosphoribosyltransferase"/>
    <property type="match status" value="1"/>
</dbReference>
<dbReference type="Gene3D" id="3.40.50.2020">
    <property type="match status" value="1"/>
</dbReference>
<dbReference type="HAMAP" id="MF_01903">
    <property type="entry name" value="XGPRT"/>
    <property type="match status" value="1"/>
</dbReference>
<dbReference type="InterPro" id="IPR000836">
    <property type="entry name" value="PRibTrfase_dom"/>
</dbReference>
<dbReference type="InterPro" id="IPR029057">
    <property type="entry name" value="PRTase-like"/>
</dbReference>
<dbReference type="InterPro" id="IPR023747">
    <property type="entry name" value="Xanthine_Guanine_PRibTrfase"/>
</dbReference>
<dbReference type="NCBIfam" id="NF006613">
    <property type="entry name" value="PRK09177.1"/>
    <property type="match status" value="1"/>
</dbReference>
<dbReference type="PANTHER" id="PTHR39563">
    <property type="entry name" value="XANTHINE PHOSPHORIBOSYLTRANSFERASE"/>
    <property type="match status" value="1"/>
</dbReference>
<dbReference type="PANTHER" id="PTHR39563:SF1">
    <property type="entry name" value="XANTHINE-GUANINE PHOSPHORIBOSYLTRANSFERASE"/>
    <property type="match status" value="1"/>
</dbReference>
<dbReference type="Pfam" id="PF00156">
    <property type="entry name" value="Pribosyltran"/>
    <property type="match status" value="1"/>
</dbReference>
<dbReference type="SUPFAM" id="SSF53271">
    <property type="entry name" value="PRTase-like"/>
    <property type="match status" value="1"/>
</dbReference>
<dbReference type="PROSITE" id="PS00103">
    <property type="entry name" value="PUR_PYR_PR_TRANSFER"/>
    <property type="match status" value="1"/>
</dbReference>
<keyword id="KW-0997">Cell inner membrane</keyword>
<keyword id="KW-1003">Cell membrane</keyword>
<keyword id="KW-0328">Glycosyltransferase</keyword>
<keyword id="KW-0460">Magnesium</keyword>
<keyword id="KW-0472">Membrane</keyword>
<keyword id="KW-0479">Metal-binding</keyword>
<keyword id="KW-0660">Purine salvage</keyword>
<keyword id="KW-0808">Transferase</keyword>
<evidence type="ECO:0000255" key="1">
    <source>
        <dbReference type="HAMAP-Rule" id="MF_01903"/>
    </source>
</evidence>
<feature type="chain" id="PRO_1000188765" description="Xanthine-guanine phosphoribosyltransferase">
    <location>
        <begin position="1"/>
        <end position="152"/>
    </location>
</feature>
<feature type="binding site" evidence="1">
    <location>
        <begin position="37"/>
        <end position="38"/>
    </location>
    <ligand>
        <name>5-phospho-alpha-D-ribose 1-diphosphate</name>
        <dbReference type="ChEBI" id="CHEBI:58017"/>
    </ligand>
</feature>
<feature type="binding site" evidence="1">
    <location>
        <position position="69"/>
    </location>
    <ligand>
        <name>5-phospho-alpha-D-ribose 1-diphosphate</name>
        <dbReference type="ChEBI" id="CHEBI:58017"/>
    </ligand>
</feature>
<feature type="binding site" evidence="1">
    <location>
        <position position="69"/>
    </location>
    <ligand>
        <name>GMP</name>
        <dbReference type="ChEBI" id="CHEBI:58115"/>
    </ligand>
</feature>
<feature type="binding site" evidence="1">
    <location>
        <begin position="88"/>
        <end position="96"/>
    </location>
    <ligand>
        <name>5-phospho-alpha-D-ribose 1-diphosphate</name>
        <dbReference type="ChEBI" id="CHEBI:58017"/>
    </ligand>
</feature>
<feature type="binding site" evidence="1">
    <location>
        <position position="89"/>
    </location>
    <ligand>
        <name>Mg(2+)</name>
        <dbReference type="ChEBI" id="CHEBI:18420"/>
    </ligand>
</feature>
<feature type="binding site" evidence="1">
    <location>
        <begin position="92"/>
        <end position="96"/>
    </location>
    <ligand>
        <name>GMP</name>
        <dbReference type="ChEBI" id="CHEBI:58115"/>
    </ligand>
</feature>
<feature type="binding site" evidence="1">
    <location>
        <position position="92"/>
    </location>
    <ligand>
        <name>guanine</name>
        <dbReference type="ChEBI" id="CHEBI:16235"/>
    </ligand>
</feature>
<feature type="binding site" evidence="1">
    <location>
        <position position="92"/>
    </location>
    <ligand>
        <name>xanthine</name>
        <dbReference type="ChEBI" id="CHEBI:17712"/>
    </ligand>
</feature>
<feature type="binding site" evidence="1">
    <location>
        <begin position="134"/>
        <end position="135"/>
    </location>
    <ligand>
        <name>GMP</name>
        <dbReference type="ChEBI" id="CHEBI:58115"/>
    </ligand>
</feature>
<feature type="binding site" evidence="1">
    <location>
        <position position="135"/>
    </location>
    <ligand>
        <name>guanine</name>
        <dbReference type="ChEBI" id="CHEBI:16235"/>
    </ligand>
</feature>
<feature type="binding site" evidence="1">
    <location>
        <position position="135"/>
    </location>
    <ligand>
        <name>xanthine</name>
        <dbReference type="ChEBI" id="CHEBI:17712"/>
    </ligand>
</feature>
<protein>
    <recommendedName>
        <fullName evidence="1">Xanthine-guanine phosphoribosyltransferase</fullName>
        <shortName evidence="1">XGPRT</shortName>
        <ecNumber evidence="1">2.4.2.-</ecNumber>
        <ecNumber evidence="1">2.4.2.22</ecNumber>
    </recommendedName>
    <alternativeName>
        <fullName evidence="1">Xanthine phosphoribosyltransferase</fullName>
    </alternativeName>
</protein>
<name>XGPT_YERPG</name>
<organism>
    <name type="scientific">Yersinia pestis bv. Antiqua (strain Angola)</name>
    <dbReference type="NCBI Taxonomy" id="349746"/>
    <lineage>
        <taxon>Bacteria</taxon>
        <taxon>Pseudomonadati</taxon>
        <taxon>Pseudomonadota</taxon>
        <taxon>Gammaproteobacteria</taxon>
        <taxon>Enterobacterales</taxon>
        <taxon>Yersiniaceae</taxon>
        <taxon>Yersinia</taxon>
    </lineage>
</organism>
<reference key="1">
    <citation type="journal article" date="2010" name="J. Bacteriol.">
        <title>Genome sequence of the deep-rooted Yersinia pestis strain Angola reveals new insights into the evolution and pangenome of the plague bacterium.</title>
        <authorList>
            <person name="Eppinger M."/>
            <person name="Worsham P.L."/>
            <person name="Nikolich M.P."/>
            <person name="Riley D.R."/>
            <person name="Sebastian Y."/>
            <person name="Mou S."/>
            <person name="Achtman M."/>
            <person name="Lindler L.E."/>
            <person name="Ravel J."/>
        </authorList>
    </citation>
    <scope>NUCLEOTIDE SEQUENCE [LARGE SCALE GENOMIC DNA]</scope>
    <source>
        <strain>Angola</strain>
    </source>
</reference>
<gene>
    <name evidence="1" type="primary">gpt</name>
    <name type="ordered locus">YpAngola_A3304</name>
</gene>
<proteinExistence type="inferred from homology"/>